<protein>
    <recommendedName>
        <fullName evidence="1">Ribosomal RNA small subunit methyltransferase H</fullName>
        <ecNumber evidence="1">2.1.1.199</ecNumber>
    </recommendedName>
    <alternativeName>
        <fullName evidence="1">16S rRNA m(4)C1402 methyltransferase</fullName>
    </alternativeName>
    <alternativeName>
        <fullName evidence="1">rRNA (cytosine-N(4)-)-methyltransferase RsmH</fullName>
    </alternativeName>
</protein>
<evidence type="ECO:0000255" key="1">
    <source>
        <dbReference type="HAMAP-Rule" id="MF_01007"/>
    </source>
</evidence>
<evidence type="ECO:0000256" key="2">
    <source>
        <dbReference type="SAM" id="MobiDB-lite"/>
    </source>
</evidence>
<organism>
    <name type="scientific">Brucella abortus biovar 1 (strain 9-941)</name>
    <dbReference type="NCBI Taxonomy" id="262698"/>
    <lineage>
        <taxon>Bacteria</taxon>
        <taxon>Pseudomonadati</taxon>
        <taxon>Pseudomonadota</taxon>
        <taxon>Alphaproteobacteria</taxon>
        <taxon>Hyphomicrobiales</taxon>
        <taxon>Brucellaceae</taxon>
        <taxon>Brucella/Ochrobactrum group</taxon>
        <taxon>Brucella</taxon>
    </lineage>
</organism>
<dbReference type="EC" id="2.1.1.199" evidence="1"/>
<dbReference type="EMBL" id="AE017223">
    <property type="protein sequence ID" value="AAX74764.1"/>
    <property type="molecule type" value="Genomic_DNA"/>
</dbReference>
<dbReference type="SMR" id="Q57C70"/>
<dbReference type="EnsemblBacteria" id="AAX74764">
    <property type="protein sequence ID" value="AAX74764"/>
    <property type="gene ID" value="BruAb1_1434"/>
</dbReference>
<dbReference type="KEGG" id="bmb:BruAb1_1434"/>
<dbReference type="HOGENOM" id="CLU_038422_1_1_5"/>
<dbReference type="Proteomes" id="UP000000540">
    <property type="component" value="Chromosome I"/>
</dbReference>
<dbReference type="GO" id="GO:0005737">
    <property type="term" value="C:cytoplasm"/>
    <property type="evidence" value="ECO:0007669"/>
    <property type="project" value="UniProtKB-SubCell"/>
</dbReference>
<dbReference type="GO" id="GO:0071424">
    <property type="term" value="F:rRNA (cytosine-N4-)-methyltransferase activity"/>
    <property type="evidence" value="ECO:0007669"/>
    <property type="project" value="UniProtKB-UniRule"/>
</dbReference>
<dbReference type="GO" id="GO:0070475">
    <property type="term" value="P:rRNA base methylation"/>
    <property type="evidence" value="ECO:0007669"/>
    <property type="project" value="UniProtKB-UniRule"/>
</dbReference>
<dbReference type="CDD" id="cd02440">
    <property type="entry name" value="AdoMet_MTases"/>
    <property type="match status" value="1"/>
</dbReference>
<dbReference type="Gene3D" id="1.10.150.170">
    <property type="entry name" value="Putative methyltransferase TM0872, insert domain"/>
    <property type="match status" value="1"/>
</dbReference>
<dbReference type="Gene3D" id="3.40.50.150">
    <property type="entry name" value="Vaccinia Virus protein VP39"/>
    <property type="match status" value="1"/>
</dbReference>
<dbReference type="HAMAP" id="MF_01007">
    <property type="entry name" value="16SrRNA_methyltr_H"/>
    <property type="match status" value="1"/>
</dbReference>
<dbReference type="InterPro" id="IPR002903">
    <property type="entry name" value="RsmH"/>
</dbReference>
<dbReference type="InterPro" id="IPR023397">
    <property type="entry name" value="SAM-dep_MeTrfase_MraW_recog"/>
</dbReference>
<dbReference type="InterPro" id="IPR029063">
    <property type="entry name" value="SAM-dependent_MTases_sf"/>
</dbReference>
<dbReference type="NCBIfam" id="TIGR00006">
    <property type="entry name" value="16S rRNA (cytosine(1402)-N(4))-methyltransferase RsmH"/>
    <property type="match status" value="1"/>
</dbReference>
<dbReference type="PANTHER" id="PTHR11265:SF0">
    <property type="entry name" value="12S RRNA N4-METHYLCYTIDINE METHYLTRANSFERASE"/>
    <property type="match status" value="1"/>
</dbReference>
<dbReference type="PANTHER" id="PTHR11265">
    <property type="entry name" value="S-ADENOSYL-METHYLTRANSFERASE MRAW"/>
    <property type="match status" value="1"/>
</dbReference>
<dbReference type="Pfam" id="PF01795">
    <property type="entry name" value="Methyltransf_5"/>
    <property type="match status" value="1"/>
</dbReference>
<dbReference type="PIRSF" id="PIRSF004486">
    <property type="entry name" value="MraW"/>
    <property type="match status" value="1"/>
</dbReference>
<dbReference type="SUPFAM" id="SSF81799">
    <property type="entry name" value="Putative methyltransferase TM0872, insert domain"/>
    <property type="match status" value="1"/>
</dbReference>
<dbReference type="SUPFAM" id="SSF53335">
    <property type="entry name" value="S-adenosyl-L-methionine-dependent methyltransferases"/>
    <property type="match status" value="1"/>
</dbReference>
<comment type="function">
    <text evidence="1">Specifically methylates the N4 position of cytidine in position 1402 (C1402) of 16S rRNA.</text>
</comment>
<comment type="catalytic activity">
    <reaction evidence="1">
        <text>cytidine(1402) in 16S rRNA + S-adenosyl-L-methionine = N(4)-methylcytidine(1402) in 16S rRNA + S-adenosyl-L-homocysteine + H(+)</text>
        <dbReference type="Rhea" id="RHEA:42928"/>
        <dbReference type="Rhea" id="RHEA-COMP:10286"/>
        <dbReference type="Rhea" id="RHEA-COMP:10287"/>
        <dbReference type="ChEBI" id="CHEBI:15378"/>
        <dbReference type="ChEBI" id="CHEBI:57856"/>
        <dbReference type="ChEBI" id="CHEBI:59789"/>
        <dbReference type="ChEBI" id="CHEBI:74506"/>
        <dbReference type="ChEBI" id="CHEBI:82748"/>
        <dbReference type="EC" id="2.1.1.199"/>
    </reaction>
</comment>
<comment type="subcellular location">
    <subcellularLocation>
        <location evidence="1">Cytoplasm</location>
    </subcellularLocation>
</comment>
<comment type="similarity">
    <text evidence="1">Belongs to the methyltransferase superfamily. RsmH family.</text>
</comment>
<feature type="chain" id="PRO_0000108590" description="Ribosomal RNA small subunit methyltransferase H">
    <location>
        <begin position="1"/>
        <end position="346"/>
    </location>
</feature>
<feature type="region of interest" description="Disordered" evidence="2">
    <location>
        <begin position="270"/>
        <end position="346"/>
    </location>
</feature>
<feature type="binding site" evidence="1">
    <location>
        <begin position="46"/>
        <end position="48"/>
    </location>
    <ligand>
        <name>S-adenosyl-L-methionine</name>
        <dbReference type="ChEBI" id="CHEBI:59789"/>
    </ligand>
</feature>
<feature type="binding site" evidence="1">
    <location>
        <position position="63"/>
    </location>
    <ligand>
        <name>S-adenosyl-L-methionine</name>
        <dbReference type="ChEBI" id="CHEBI:59789"/>
    </ligand>
</feature>
<feature type="binding site" evidence="1">
    <location>
        <position position="90"/>
    </location>
    <ligand>
        <name>S-adenosyl-L-methionine</name>
        <dbReference type="ChEBI" id="CHEBI:59789"/>
    </ligand>
</feature>
<feature type="binding site" evidence="1">
    <location>
        <position position="113"/>
    </location>
    <ligand>
        <name>S-adenosyl-L-methionine</name>
        <dbReference type="ChEBI" id="CHEBI:59789"/>
    </ligand>
</feature>
<feature type="binding site" evidence="1">
    <location>
        <position position="120"/>
    </location>
    <ligand>
        <name>S-adenosyl-L-methionine</name>
        <dbReference type="ChEBI" id="CHEBI:59789"/>
    </ligand>
</feature>
<name>RSMH_BRUAB</name>
<reference key="1">
    <citation type="journal article" date="2005" name="J. Bacteriol.">
        <title>Completion of the genome sequence of Brucella abortus and comparison to the highly similar genomes of Brucella melitensis and Brucella suis.</title>
        <authorList>
            <person name="Halling S.M."/>
            <person name="Peterson-Burch B.D."/>
            <person name="Bricker B.J."/>
            <person name="Zuerner R.L."/>
            <person name="Qing Z."/>
            <person name="Li L.-L."/>
            <person name="Kapur V."/>
            <person name="Alt D.P."/>
            <person name="Olsen S.C."/>
        </authorList>
    </citation>
    <scope>NUCLEOTIDE SEQUENCE [LARGE SCALE GENOMIC DNA]</scope>
    <source>
        <strain>9-941</strain>
    </source>
</reference>
<gene>
    <name evidence="1" type="primary">rsmH</name>
    <name type="synonym">mraW</name>
    <name type="ordered locus">BruAb1_1434</name>
</gene>
<sequence>MASLGGDNSQAEGAEVRHVPVLIAEVIDALKPAPGAVIVDGTFGAGGYTRRILETGADVIAIDRDPTAIEAGRAMEKEFPGRLNLVESRFSALDEAVARMSGAGKKVDGVVLDIGVSSMQIDEAERGFSFQKDGPLDMRMSSRGPSAADAVNRLKTGDLARIFNFLGEERHAGRIARMIEKRRAAKPFTRTLDLANAIETLVGRNPKDRIHPATRVFQALRVYVNDELGELARALLAAERILKPGGRLVVVTFHSLEDRMVKRFFADRAGGSAGSRHMPETHMRLPSFTPAVKGAVGPTPEEEERNPRARSAKLRAGIRTENPPLEDDLSLFGLPKLPETNELARS</sequence>
<proteinExistence type="inferred from homology"/>
<accession>Q57C70</accession>
<keyword id="KW-0963">Cytoplasm</keyword>
<keyword id="KW-0489">Methyltransferase</keyword>
<keyword id="KW-0698">rRNA processing</keyword>
<keyword id="KW-0949">S-adenosyl-L-methionine</keyword>
<keyword id="KW-0808">Transferase</keyword>